<evidence type="ECO:0000255" key="1">
    <source>
        <dbReference type="HAMAP-Rule" id="MF_00001"/>
    </source>
</evidence>
<dbReference type="EC" id="2.1.3.2" evidence="1"/>
<dbReference type="EMBL" id="AE017283">
    <property type="protein sequence ID" value="AAT82749.1"/>
    <property type="molecule type" value="Genomic_DNA"/>
</dbReference>
<dbReference type="RefSeq" id="WP_002517819.1">
    <property type="nucleotide sequence ID" value="NZ_CP025935.1"/>
</dbReference>
<dbReference type="SMR" id="Q6A917"/>
<dbReference type="EnsemblBacteria" id="AAT82749">
    <property type="protein sequence ID" value="AAT82749"/>
    <property type="gene ID" value="PPA0997"/>
</dbReference>
<dbReference type="KEGG" id="pac:PPA0997"/>
<dbReference type="PATRIC" id="fig|267747.3.peg.1032"/>
<dbReference type="eggNOG" id="COG0540">
    <property type="taxonomic scope" value="Bacteria"/>
</dbReference>
<dbReference type="HOGENOM" id="CLU_043846_2_1_11"/>
<dbReference type="UniPathway" id="UPA00070">
    <property type="reaction ID" value="UER00116"/>
</dbReference>
<dbReference type="Proteomes" id="UP000000603">
    <property type="component" value="Chromosome"/>
</dbReference>
<dbReference type="GO" id="GO:0005829">
    <property type="term" value="C:cytosol"/>
    <property type="evidence" value="ECO:0007669"/>
    <property type="project" value="TreeGrafter"/>
</dbReference>
<dbReference type="GO" id="GO:0016597">
    <property type="term" value="F:amino acid binding"/>
    <property type="evidence" value="ECO:0007669"/>
    <property type="project" value="InterPro"/>
</dbReference>
<dbReference type="GO" id="GO:0004070">
    <property type="term" value="F:aspartate carbamoyltransferase activity"/>
    <property type="evidence" value="ECO:0007669"/>
    <property type="project" value="UniProtKB-UniRule"/>
</dbReference>
<dbReference type="GO" id="GO:0006207">
    <property type="term" value="P:'de novo' pyrimidine nucleobase biosynthetic process"/>
    <property type="evidence" value="ECO:0007669"/>
    <property type="project" value="InterPro"/>
</dbReference>
<dbReference type="GO" id="GO:0044205">
    <property type="term" value="P:'de novo' UMP biosynthetic process"/>
    <property type="evidence" value="ECO:0007669"/>
    <property type="project" value="UniProtKB-UniRule"/>
</dbReference>
<dbReference type="GO" id="GO:0006520">
    <property type="term" value="P:amino acid metabolic process"/>
    <property type="evidence" value="ECO:0007669"/>
    <property type="project" value="InterPro"/>
</dbReference>
<dbReference type="FunFam" id="3.40.50.1370:FF:000011">
    <property type="entry name" value="Aspartate carbamoyltransferase"/>
    <property type="match status" value="1"/>
</dbReference>
<dbReference type="Gene3D" id="3.40.50.1370">
    <property type="entry name" value="Aspartate/ornithine carbamoyltransferase"/>
    <property type="match status" value="2"/>
</dbReference>
<dbReference type="HAMAP" id="MF_00001">
    <property type="entry name" value="Asp_carb_tr"/>
    <property type="match status" value="1"/>
</dbReference>
<dbReference type="InterPro" id="IPR006132">
    <property type="entry name" value="Asp/Orn_carbamoyltranf_P-bd"/>
</dbReference>
<dbReference type="InterPro" id="IPR006130">
    <property type="entry name" value="Asp/Orn_carbamoylTrfase"/>
</dbReference>
<dbReference type="InterPro" id="IPR036901">
    <property type="entry name" value="Asp/Orn_carbamoylTrfase_sf"/>
</dbReference>
<dbReference type="InterPro" id="IPR002082">
    <property type="entry name" value="Asp_carbamoyltransf"/>
</dbReference>
<dbReference type="InterPro" id="IPR006131">
    <property type="entry name" value="Asp_carbamoyltransf_Asp/Orn-bd"/>
</dbReference>
<dbReference type="NCBIfam" id="TIGR00670">
    <property type="entry name" value="asp_carb_tr"/>
    <property type="match status" value="1"/>
</dbReference>
<dbReference type="NCBIfam" id="NF002032">
    <property type="entry name" value="PRK00856.1"/>
    <property type="match status" value="1"/>
</dbReference>
<dbReference type="PANTHER" id="PTHR45753:SF6">
    <property type="entry name" value="ASPARTATE CARBAMOYLTRANSFERASE"/>
    <property type="match status" value="1"/>
</dbReference>
<dbReference type="PANTHER" id="PTHR45753">
    <property type="entry name" value="ORNITHINE CARBAMOYLTRANSFERASE, MITOCHONDRIAL"/>
    <property type="match status" value="1"/>
</dbReference>
<dbReference type="Pfam" id="PF00185">
    <property type="entry name" value="OTCace"/>
    <property type="match status" value="1"/>
</dbReference>
<dbReference type="Pfam" id="PF02729">
    <property type="entry name" value="OTCace_N"/>
    <property type="match status" value="1"/>
</dbReference>
<dbReference type="PRINTS" id="PR00100">
    <property type="entry name" value="AOTCASE"/>
</dbReference>
<dbReference type="PRINTS" id="PR00101">
    <property type="entry name" value="ATCASE"/>
</dbReference>
<dbReference type="SUPFAM" id="SSF53671">
    <property type="entry name" value="Aspartate/ornithine carbamoyltransferase"/>
    <property type="match status" value="1"/>
</dbReference>
<dbReference type="PROSITE" id="PS00097">
    <property type="entry name" value="CARBAMOYLTRANSFERASE"/>
    <property type="match status" value="1"/>
</dbReference>
<comment type="function">
    <text evidence="1">Catalyzes the condensation of carbamoyl phosphate and aspartate to form carbamoyl aspartate and inorganic phosphate, the committed step in the de novo pyrimidine nucleotide biosynthesis pathway.</text>
</comment>
<comment type="catalytic activity">
    <reaction evidence="1">
        <text>carbamoyl phosphate + L-aspartate = N-carbamoyl-L-aspartate + phosphate + H(+)</text>
        <dbReference type="Rhea" id="RHEA:20013"/>
        <dbReference type="ChEBI" id="CHEBI:15378"/>
        <dbReference type="ChEBI" id="CHEBI:29991"/>
        <dbReference type="ChEBI" id="CHEBI:32814"/>
        <dbReference type="ChEBI" id="CHEBI:43474"/>
        <dbReference type="ChEBI" id="CHEBI:58228"/>
        <dbReference type="EC" id="2.1.3.2"/>
    </reaction>
</comment>
<comment type="pathway">
    <text evidence="1">Pyrimidine metabolism; UMP biosynthesis via de novo pathway; (S)-dihydroorotate from bicarbonate: step 2/3.</text>
</comment>
<comment type="subunit">
    <text evidence="1">Heterododecamer (2C3:3R2) of six catalytic PyrB chains organized as two trimers (C3), and six regulatory PyrI chains organized as three dimers (R2).</text>
</comment>
<comment type="similarity">
    <text evidence="1">Belongs to the aspartate/ornithine carbamoyltransferase superfamily. ATCase family.</text>
</comment>
<reference key="1">
    <citation type="journal article" date="2004" name="Science">
        <title>The complete genome sequence of Propionibacterium acnes, a commensal of human skin.</title>
        <authorList>
            <person name="Brueggemann H."/>
            <person name="Henne A."/>
            <person name="Hoster F."/>
            <person name="Liesegang H."/>
            <person name="Wiezer A."/>
            <person name="Strittmatter A."/>
            <person name="Hujer S."/>
            <person name="Duerre P."/>
            <person name="Gottschalk G."/>
        </authorList>
    </citation>
    <scope>NUCLEOTIDE SEQUENCE [LARGE SCALE GENOMIC DNA]</scope>
    <source>
        <strain>DSM 16379 / KPA171202</strain>
    </source>
</reference>
<gene>
    <name evidence="1" type="primary">pyrB</name>
    <name type="ordered locus">PPA0997</name>
</gene>
<organism>
    <name type="scientific">Cutibacterium acnes (strain DSM 16379 / KPA171202)</name>
    <name type="common">Propionibacterium acnes</name>
    <dbReference type="NCBI Taxonomy" id="267747"/>
    <lineage>
        <taxon>Bacteria</taxon>
        <taxon>Bacillati</taxon>
        <taxon>Actinomycetota</taxon>
        <taxon>Actinomycetes</taxon>
        <taxon>Propionibacteriales</taxon>
        <taxon>Propionibacteriaceae</taxon>
        <taxon>Cutibacterium</taxon>
    </lineage>
</organism>
<feature type="chain" id="PRO_0000113172" description="Aspartate carbamoyltransferase catalytic subunit">
    <location>
        <begin position="1"/>
        <end position="314"/>
    </location>
</feature>
<feature type="binding site" evidence="1">
    <location>
        <position position="63"/>
    </location>
    <ligand>
        <name>carbamoyl phosphate</name>
        <dbReference type="ChEBI" id="CHEBI:58228"/>
    </ligand>
</feature>
<feature type="binding site" evidence="1">
    <location>
        <position position="64"/>
    </location>
    <ligand>
        <name>carbamoyl phosphate</name>
        <dbReference type="ChEBI" id="CHEBI:58228"/>
    </ligand>
</feature>
<feature type="binding site" evidence="1">
    <location>
        <position position="91"/>
    </location>
    <ligand>
        <name>L-aspartate</name>
        <dbReference type="ChEBI" id="CHEBI:29991"/>
    </ligand>
</feature>
<feature type="binding site" evidence="1">
    <location>
        <position position="113"/>
    </location>
    <ligand>
        <name>carbamoyl phosphate</name>
        <dbReference type="ChEBI" id="CHEBI:58228"/>
    </ligand>
</feature>
<feature type="binding site" evidence="1">
    <location>
        <position position="143"/>
    </location>
    <ligand>
        <name>carbamoyl phosphate</name>
        <dbReference type="ChEBI" id="CHEBI:58228"/>
    </ligand>
</feature>
<feature type="binding site" evidence="1">
    <location>
        <position position="146"/>
    </location>
    <ligand>
        <name>carbamoyl phosphate</name>
        <dbReference type="ChEBI" id="CHEBI:58228"/>
    </ligand>
</feature>
<feature type="binding site" evidence="1">
    <location>
        <position position="176"/>
    </location>
    <ligand>
        <name>L-aspartate</name>
        <dbReference type="ChEBI" id="CHEBI:29991"/>
    </ligand>
</feature>
<feature type="binding site" evidence="1">
    <location>
        <position position="228"/>
    </location>
    <ligand>
        <name>L-aspartate</name>
        <dbReference type="ChEBI" id="CHEBI:29991"/>
    </ligand>
</feature>
<feature type="binding site" evidence="1">
    <location>
        <position position="269"/>
    </location>
    <ligand>
        <name>carbamoyl phosphate</name>
        <dbReference type="ChEBI" id="CHEBI:58228"/>
    </ligand>
</feature>
<feature type="binding site" evidence="1">
    <location>
        <position position="270"/>
    </location>
    <ligand>
        <name>carbamoyl phosphate</name>
        <dbReference type="ChEBI" id="CHEBI:58228"/>
    </ligand>
</feature>
<protein>
    <recommendedName>
        <fullName evidence="1">Aspartate carbamoyltransferase catalytic subunit</fullName>
        <ecNumber evidence="1">2.1.3.2</ecNumber>
    </recommendedName>
    <alternativeName>
        <fullName evidence="1">Aspartate transcarbamylase</fullName>
        <shortName evidence="1">ATCase</shortName>
    </alternativeName>
</protein>
<sequence length="314" mass="34738">MSTEVVEEFDADYTGRHFLSVEDMSSDDVMRIIERGRQFKAGDAPRVEPGHVAINMFFENSTRTMTSFQMAEHRLGMKILDFDPGHSSVTKGESLYDSVRTVDAIGAEVAVIRHSTNHYYDYLLATGMLGLSVVNGGDGSGQHPSQCMLDLMTIAEEFGHVDGLTVAISGDIVHSRVARSDAQILTRLGANVVFTGPREWMDHDVTRLGTMATLDEVIADVDVAMMLRVQHERFDAGPDFSATDYLHTFGLTDERAERMKPHAIIMHPAPVNRGCEISGHLVEAPSSRIFEQMGNGVMVRMAILEQVLHGRETK</sequence>
<accession>Q6A917</accession>
<proteinExistence type="inferred from homology"/>
<name>PYRB_CUTAK</name>
<keyword id="KW-0665">Pyrimidine biosynthesis</keyword>
<keyword id="KW-0808">Transferase</keyword>